<keyword id="KW-0012">Acyltransferase</keyword>
<keyword id="KW-0449">Lipoprotein</keyword>
<keyword id="KW-0472">Membrane</keyword>
<keyword id="KW-0564">Palmitate</keyword>
<keyword id="KW-1185">Reference proteome</keyword>
<keyword id="KW-0808">Transferase</keyword>
<keyword id="KW-0812">Transmembrane</keyword>
<keyword id="KW-1133">Transmembrane helix</keyword>
<sequence>MWQCKNKSRWWYSLVPILCICIMCYGAIAYSYSFCYVEVWTHLGMKAAAIGMTCLHLIIVILLWIIWAQIIMMGPGRQPRVAPFMILPEMADAGERAKEGAATSVLPPDVYQCDTQGYPVWCSVCQSLKGLRTHHSVHLGFCVPRLDHYCVWLGTVIGRRNYRLFNQFLMCFLMHALIIFVSVVSLQRRIASSARMRGEREDPNVLVVLSLSCLVLLMVGALFISFLNYMANNQTTIEKLYTPKRQPRTMCFCVYNPADQYRYVVKSLPHENWNMWDKGSAYANYKDFLGSSIWRWFIPIGSNIPEFQTSAWEDDYNAILGPYKEELGSHYRDILMQRIEQGKYVTRLRVYGDKFREGL</sequence>
<comment type="catalytic activity">
    <reaction>
        <text>L-cysteinyl-[protein] + hexadecanoyl-CoA = S-hexadecanoyl-L-cysteinyl-[protein] + CoA</text>
        <dbReference type="Rhea" id="RHEA:36683"/>
        <dbReference type="Rhea" id="RHEA-COMP:10131"/>
        <dbReference type="Rhea" id="RHEA-COMP:11032"/>
        <dbReference type="ChEBI" id="CHEBI:29950"/>
        <dbReference type="ChEBI" id="CHEBI:57287"/>
        <dbReference type="ChEBI" id="CHEBI:57379"/>
        <dbReference type="ChEBI" id="CHEBI:74151"/>
        <dbReference type="EC" id="2.3.1.225"/>
    </reaction>
</comment>
<comment type="subcellular location">
    <subcellularLocation>
        <location evidence="4">Membrane</location>
        <topology evidence="4">Multi-pass membrane protein</topology>
    </subcellularLocation>
</comment>
<comment type="domain">
    <text evidence="1">The DHHC domain is required for palmitoyltransferase activity.</text>
</comment>
<comment type="PTM">
    <text evidence="1">Autopalmitoylated.</text>
</comment>
<comment type="similarity">
    <text evidence="4">Belongs to the DHHC palmitoyltransferase family. PFA5 subfamily.</text>
</comment>
<gene>
    <name type="primary">PFA5</name>
    <name type="ordered locus">ABR203W</name>
</gene>
<proteinExistence type="inferred from homology"/>
<evidence type="ECO:0000250" key="1"/>
<evidence type="ECO:0000255" key="2"/>
<evidence type="ECO:0000255" key="3">
    <source>
        <dbReference type="PROSITE-ProRule" id="PRU00067"/>
    </source>
</evidence>
<evidence type="ECO:0000305" key="4"/>
<dbReference type="EC" id="2.3.1.225"/>
<dbReference type="EMBL" id="AE016815">
    <property type="protein sequence ID" value="AAS50976.2"/>
    <property type="molecule type" value="Genomic_DNA"/>
</dbReference>
<dbReference type="RefSeq" id="NP_983152.2">
    <property type="nucleotide sequence ID" value="NM_208505.2"/>
</dbReference>
<dbReference type="FunCoup" id="Q75D19">
    <property type="interactions" value="935"/>
</dbReference>
<dbReference type="STRING" id="284811.Q75D19"/>
<dbReference type="EnsemblFungi" id="AAS50976">
    <property type="protein sequence ID" value="AAS50976"/>
    <property type="gene ID" value="AGOS_ABR203W"/>
</dbReference>
<dbReference type="GeneID" id="4619262"/>
<dbReference type="KEGG" id="ago:AGOS_ABR203W"/>
<dbReference type="eggNOG" id="KOG1311">
    <property type="taxonomic scope" value="Eukaryota"/>
</dbReference>
<dbReference type="HOGENOM" id="CLU_064801_0_0_1"/>
<dbReference type="InParanoid" id="Q75D19"/>
<dbReference type="OMA" id="YCVWIGT"/>
<dbReference type="OrthoDB" id="331948at2759"/>
<dbReference type="Proteomes" id="UP000000591">
    <property type="component" value="Chromosome II"/>
</dbReference>
<dbReference type="GO" id="GO:0005783">
    <property type="term" value="C:endoplasmic reticulum"/>
    <property type="evidence" value="ECO:0000318"/>
    <property type="project" value="GO_Central"/>
</dbReference>
<dbReference type="GO" id="GO:0005794">
    <property type="term" value="C:Golgi apparatus"/>
    <property type="evidence" value="ECO:0000318"/>
    <property type="project" value="GO_Central"/>
</dbReference>
<dbReference type="GO" id="GO:0016020">
    <property type="term" value="C:membrane"/>
    <property type="evidence" value="ECO:0007669"/>
    <property type="project" value="UniProtKB-SubCell"/>
</dbReference>
<dbReference type="GO" id="GO:0019706">
    <property type="term" value="F:protein-cysteine S-palmitoyltransferase activity"/>
    <property type="evidence" value="ECO:0000318"/>
    <property type="project" value="GO_Central"/>
</dbReference>
<dbReference type="GO" id="GO:0006612">
    <property type="term" value="P:protein targeting to membrane"/>
    <property type="evidence" value="ECO:0000318"/>
    <property type="project" value="GO_Central"/>
</dbReference>
<dbReference type="InterPro" id="IPR001594">
    <property type="entry name" value="Palmitoyltrfase_DHHC"/>
</dbReference>
<dbReference type="InterPro" id="IPR039859">
    <property type="entry name" value="PFA4/ZDH16/20/ERF2-like"/>
</dbReference>
<dbReference type="PANTHER" id="PTHR22883:SF23">
    <property type="entry name" value="PALMITOYLTRANSFERASE ZDHHC6"/>
    <property type="match status" value="1"/>
</dbReference>
<dbReference type="PANTHER" id="PTHR22883">
    <property type="entry name" value="ZINC FINGER DHHC DOMAIN CONTAINING PROTEIN"/>
    <property type="match status" value="1"/>
</dbReference>
<dbReference type="Pfam" id="PF01529">
    <property type="entry name" value="DHHC"/>
    <property type="match status" value="1"/>
</dbReference>
<dbReference type="PROSITE" id="PS50216">
    <property type="entry name" value="DHHC"/>
    <property type="match status" value="1"/>
</dbReference>
<organism>
    <name type="scientific">Eremothecium gossypii (strain ATCC 10895 / CBS 109.51 / FGSC 9923 / NRRL Y-1056)</name>
    <name type="common">Yeast</name>
    <name type="synonym">Ashbya gossypii</name>
    <dbReference type="NCBI Taxonomy" id="284811"/>
    <lineage>
        <taxon>Eukaryota</taxon>
        <taxon>Fungi</taxon>
        <taxon>Dikarya</taxon>
        <taxon>Ascomycota</taxon>
        <taxon>Saccharomycotina</taxon>
        <taxon>Saccharomycetes</taxon>
        <taxon>Saccharomycetales</taxon>
        <taxon>Saccharomycetaceae</taxon>
        <taxon>Eremothecium</taxon>
    </lineage>
</organism>
<protein>
    <recommendedName>
        <fullName>Palmitoyltransferase PFA5</fullName>
        <ecNumber>2.3.1.225</ecNumber>
    </recommendedName>
    <alternativeName>
        <fullName>Protein fatty acyltransferase 5</fullName>
    </alternativeName>
</protein>
<name>PFA5_EREGS</name>
<reference key="1">
    <citation type="journal article" date="2004" name="Science">
        <title>The Ashbya gossypii genome as a tool for mapping the ancient Saccharomyces cerevisiae genome.</title>
        <authorList>
            <person name="Dietrich F.S."/>
            <person name="Voegeli S."/>
            <person name="Brachat S."/>
            <person name="Lerch A."/>
            <person name="Gates K."/>
            <person name="Steiner S."/>
            <person name="Mohr C."/>
            <person name="Poehlmann R."/>
            <person name="Luedi P."/>
            <person name="Choi S."/>
            <person name="Wing R.A."/>
            <person name="Flavier A."/>
            <person name="Gaffney T.D."/>
            <person name="Philippsen P."/>
        </authorList>
    </citation>
    <scope>NUCLEOTIDE SEQUENCE [LARGE SCALE GENOMIC DNA]</scope>
    <source>
        <strain>ATCC 10895 / CBS 109.51 / FGSC 9923 / NRRL Y-1056</strain>
    </source>
</reference>
<reference key="2">
    <citation type="journal article" date="2013" name="G3 (Bethesda)">
        <title>Genomes of Ashbya fungi isolated from insects reveal four mating-type loci, numerous translocations, lack of transposons, and distinct gene duplications.</title>
        <authorList>
            <person name="Dietrich F.S."/>
            <person name="Voegeli S."/>
            <person name="Kuo S."/>
            <person name="Philippsen P."/>
        </authorList>
    </citation>
    <scope>GENOME REANNOTATION</scope>
    <scope>SEQUENCE REVISION TO 241</scope>
    <source>
        <strain>ATCC 10895 / CBS 109.51 / FGSC 9923 / NRRL Y-1056</strain>
    </source>
</reference>
<feature type="chain" id="PRO_0000212973" description="Palmitoyltransferase PFA5">
    <location>
        <begin position="1"/>
        <end position="359"/>
    </location>
</feature>
<feature type="transmembrane region" description="Helical" evidence="2">
    <location>
        <begin position="10"/>
        <end position="30"/>
    </location>
</feature>
<feature type="transmembrane region" description="Helical" evidence="2">
    <location>
        <begin position="47"/>
        <end position="67"/>
    </location>
</feature>
<feature type="transmembrane region" description="Helical" evidence="2">
    <location>
        <begin position="164"/>
        <end position="184"/>
    </location>
</feature>
<feature type="transmembrane region" description="Helical" evidence="2">
    <location>
        <begin position="206"/>
        <end position="226"/>
    </location>
</feature>
<feature type="domain" description="DHHC" evidence="3">
    <location>
        <begin position="120"/>
        <end position="170"/>
    </location>
</feature>
<accession>Q75D19</accession>